<gene>
    <name evidence="1" type="primary">hemL</name>
    <name type="ordered locus">Tmel_0711</name>
</gene>
<proteinExistence type="inferred from homology"/>
<organism>
    <name type="scientific">Thermosipho melanesiensis (strain DSM 12029 / CIP 104789 / BI429)</name>
    <dbReference type="NCBI Taxonomy" id="391009"/>
    <lineage>
        <taxon>Bacteria</taxon>
        <taxon>Thermotogati</taxon>
        <taxon>Thermotogota</taxon>
        <taxon>Thermotogae</taxon>
        <taxon>Thermotogales</taxon>
        <taxon>Fervidobacteriaceae</taxon>
        <taxon>Thermosipho</taxon>
    </lineage>
</organism>
<name>GSA_THEM4</name>
<dbReference type="EC" id="5.4.3.8" evidence="1"/>
<dbReference type="EMBL" id="CP000716">
    <property type="protein sequence ID" value="ABR30575.1"/>
    <property type="molecule type" value="Genomic_DNA"/>
</dbReference>
<dbReference type="RefSeq" id="WP_012056936.1">
    <property type="nucleotide sequence ID" value="NC_009616.1"/>
</dbReference>
<dbReference type="SMR" id="A6LKX4"/>
<dbReference type="STRING" id="391009.Tmel_0711"/>
<dbReference type="KEGG" id="tme:Tmel_0711"/>
<dbReference type="eggNOG" id="COG0001">
    <property type="taxonomic scope" value="Bacteria"/>
</dbReference>
<dbReference type="HOGENOM" id="CLU_016922_1_5_0"/>
<dbReference type="OrthoDB" id="9801052at2"/>
<dbReference type="UniPathway" id="UPA00251">
    <property type="reaction ID" value="UER00317"/>
</dbReference>
<dbReference type="Proteomes" id="UP000001110">
    <property type="component" value="Chromosome"/>
</dbReference>
<dbReference type="GO" id="GO:0005737">
    <property type="term" value="C:cytoplasm"/>
    <property type="evidence" value="ECO:0007669"/>
    <property type="project" value="UniProtKB-SubCell"/>
</dbReference>
<dbReference type="GO" id="GO:0042286">
    <property type="term" value="F:glutamate-1-semialdehyde 2,1-aminomutase activity"/>
    <property type="evidence" value="ECO:0007669"/>
    <property type="project" value="UniProtKB-UniRule"/>
</dbReference>
<dbReference type="GO" id="GO:0030170">
    <property type="term" value="F:pyridoxal phosphate binding"/>
    <property type="evidence" value="ECO:0007669"/>
    <property type="project" value="InterPro"/>
</dbReference>
<dbReference type="GO" id="GO:0008483">
    <property type="term" value="F:transaminase activity"/>
    <property type="evidence" value="ECO:0007669"/>
    <property type="project" value="InterPro"/>
</dbReference>
<dbReference type="GO" id="GO:0006782">
    <property type="term" value="P:protoporphyrinogen IX biosynthetic process"/>
    <property type="evidence" value="ECO:0007669"/>
    <property type="project" value="UniProtKB-UniRule"/>
</dbReference>
<dbReference type="CDD" id="cd00610">
    <property type="entry name" value="OAT_like"/>
    <property type="match status" value="1"/>
</dbReference>
<dbReference type="FunFam" id="3.40.640.10:FF:000021">
    <property type="entry name" value="Glutamate-1-semialdehyde 2,1-aminomutase"/>
    <property type="match status" value="1"/>
</dbReference>
<dbReference type="Gene3D" id="3.90.1150.10">
    <property type="entry name" value="Aspartate Aminotransferase, domain 1"/>
    <property type="match status" value="1"/>
</dbReference>
<dbReference type="Gene3D" id="3.40.640.10">
    <property type="entry name" value="Type I PLP-dependent aspartate aminotransferase-like (Major domain)"/>
    <property type="match status" value="1"/>
</dbReference>
<dbReference type="HAMAP" id="MF_00375">
    <property type="entry name" value="HemL_aminotrans_3"/>
    <property type="match status" value="1"/>
</dbReference>
<dbReference type="InterPro" id="IPR004639">
    <property type="entry name" value="4pyrrol_synth_GluAld_NH2Trfase"/>
</dbReference>
<dbReference type="InterPro" id="IPR005814">
    <property type="entry name" value="Aminotrans_3"/>
</dbReference>
<dbReference type="InterPro" id="IPR049704">
    <property type="entry name" value="Aminotrans_3_PPA_site"/>
</dbReference>
<dbReference type="InterPro" id="IPR015424">
    <property type="entry name" value="PyrdxlP-dep_Trfase"/>
</dbReference>
<dbReference type="InterPro" id="IPR015421">
    <property type="entry name" value="PyrdxlP-dep_Trfase_major"/>
</dbReference>
<dbReference type="InterPro" id="IPR015422">
    <property type="entry name" value="PyrdxlP-dep_Trfase_small"/>
</dbReference>
<dbReference type="NCBIfam" id="TIGR00713">
    <property type="entry name" value="hemL"/>
    <property type="match status" value="1"/>
</dbReference>
<dbReference type="NCBIfam" id="NF000818">
    <property type="entry name" value="PRK00062.1"/>
    <property type="match status" value="1"/>
</dbReference>
<dbReference type="PANTHER" id="PTHR43713">
    <property type="entry name" value="GLUTAMATE-1-SEMIALDEHYDE 2,1-AMINOMUTASE"/>
    <property type="match status" value="1"/>
</dbReference>
<dbReference type="PANTHER" id="PTHR43713:SF3">
    <property type="entry name" value="GLUTAMATE-1-SEMIALDEHYDE 2,1-AMINOMUTASE 1, CHLOROPLASTIC-RELATED"/>
    <property type="match status" value="1"/>
</dbReference>
<dbReference type="Pfam" id="PF00202">
    <property type="entry name" value="Aminotran_3"/>
    <property type="match status" value="1"/>
</dbReference>
<dbReference type="SUPFAM" id="SSF53383">
    <property type="entry name" value="PLP-dependent transferases"/>
    <property type="match status" value="1"/>
</dbReference>
<dbReference type="PROSITE" id="PS00600">
    <property type="entry name" value="AA_TRANSFER_CLASS_3"/>
    <property type="match status" value="1"/>
</dbReference>
<keyword id="KW-0963">Cytoplasm</keyword>
<keyword id="KW-0413">Isomerase</keyword>
<keyword id="KW-0627">Porphyrin biosynthesis</keyword>
<keyword id="KW-0663">Pyridoxal phosphate</keyword>
<reference key="1">
    <citation type="submission" date="2007-05" db="EMBL/GenBank/DDBJ databases">
        <title>Complete sequence of Thermosipho melanesiensis BI429.</title>
        <authorList>
            <consortium name="US DOE Joint Genome Institute"/>
            <person name="Copeland A."/>
            <person name="Lucas S."/>
            <person name="Lapidus A."/>
            <person name="Barry K."/>
            <person name="Glavina del Rio T."/>
            <person name="Dalin E."/>
            <person name="Tice H."/>
            <person name="Pitluck S."/>
            <person name="Chertkov O."/>
            <person name="Brettin T."/>
            <person name="Bruce D."/>
            <person name="Detter J.C."/>
            <person name="Han C."/>
            <person name="Schmutz J."/>
            <person name="Larimer F."/>
            <person name="Land M."/>
            <person name="Hauser L."/>
            <person name="Kyrpides N."/>
            <person name="Mikhailova N."/>
            <person name="Nelson K."/>
            <person name="Gogarten J.P."/>
            <person name="Noll K."/>
            <person name="Richardson P."/>
        </authorList>
    </citation>
    <scope>NUCLEOTIDE SEQUENCE [LARGE SCALE GENOMIC DNA]</scope>
    <source>
        <strain>DSM 12029 / CIP 104789 / BI429</strain>
    </source>
</reference>
<evidence type="ECO:0000255" key="1">
    <source>
        <dbReference type="HAMAP-Rule" id="MF_00375"/>
    </source>
</evidence>
<accession>A6LKX4</accession>
<sequence length="423" mass="46595">MFEKAKEFMPGGVNSPVRAFKSVELDPIFVKSAKGSKIKDINNNEYIDYIQSWGALILGHSHEVVINAINEQSQKGTSYGLCHPLEVEMAQILVENIPSIEMVRMVNSGTEAVMSAIRLARAYTKRDFIVKFEGCYHGHSDSLLVKAGSGALTFGTPNSEGVTKEFVSKTIVAKYNDVQNINEIFENFGDKIACVIVEPIAGNMGVVPPKPNFLLTLRKLTKKYNSILIFDEVITGFRVSQNGAQGLFNVIPDLTTLGKVIGGGLPVGAFGGKKEIMQLISPQGPVYQAGTLSGNPLTLAAGVSTLKFILNNKNFYKKLDELAKTLEEGLLYALKDFNIKVNRVGSMISFFFNGSSVDTYEKVISSDVNMYKKLFKYFLSYGILLPPSPFESLFISYAHTNEDIQQTIDIAMKFSKNLKEGKV</sequence>
<protein>
    <recommendedName>
        <fullName evidence="1">Glutamate-1-semialdehyde 2,1-aminomutase</fullName>
        <shortName evidence="1">GSA</shortName>
        <ecNumber evidence="1">5.4.3.8</ecNumber>
    </recommendedName>
    <alternativeName>
        <fullName evidence="1">Glutamate-1-semialdehyde aminotransferase</fullName>
        <shortName evidence="1">GSA-AT</shortName>
    </alternativeName>
</protein>
<comment type="catalytic activity">
    <reaction evidence="1">
        <text>(S)-4-amino-5-oxopentanoate = 5-aminolevulinate</text>
        <dbReference type="Rhea" id="RHEA:14265"/>
        <dbReference type="ChEBI" id="CHEBI:57501"/>
        <dbReference type="ChEBI" id="CHEBI:356416"/>
        <dbReference type="EC" id="5.4.3.8"/>
    </reaction>
</comment>
<comment type="cofactor">
    <cofactor evidence="1">
        <name>pyridoxal 5'-phosphate</name>
        <dbReference type="ChEBI" id="CHEBI:597326"/>
    </cofactor>
</comment>
<comment type="pathway">
    <text evidence="1">Porphyrin-containing compound metabolism; protoporphyrin-IX biosynthesis; 5-aminolevulinate from L-glutamyl-tRNA(Glu): step 2/2.</text>
</comment>
<comment type="subunit">
    <text evidence="1">Homodimer.</text>
</comment>
<comment type="subcellular location">
    <subcellularLocation>
        <location evidence="1">Cytoplasm</location>
    </subcellularLocation>
</comment>
<comment type="similarity">
    <text evidence="1">Belongs to the class-III pyridoxal-phosphate-dependent aminotransferase family. HemL subfamily.</text>
</comment>
<feature type="chain" id="PRO_0000382388" description="Glutamate-1-semialdehyde 2,1-aminomutase">
    <location>
        <begin position="1"/>
        <end position="423"/>
    </location>
</feature>
<feature type="modified residue" description="N6-(pyridoxal phosphate)lysine" evidence="1">
    <location>
        <position position="259"/>
    </location>
</feature>